<proteinExistence type="inferred from homology"/>
<name>ACCD_YERPY</name>
<dbReference type="EC" id="2.1.3.15" evidence="1"/>
<dbReference type="EMBL" id="CP000950">
    <property type="protein sequence ID" value="ACA67824.1"/>
    <property type="molecule type" value="Genomic_DNA"/>
</dbReference>
<dbReference type="RefSeq" id="WP_002209729.1">
    <property type="nucleotide sequence ID" value="NZ_CP009792.1"/>
</dbReference>
<dbReference type="SMR" id="B1JGI4"/>
<dbReference type="GeneID" id="57975921"/>
<dbReference type="KEGG" id="ypy:YPK_1531"/>
<dbReference type="PATRIC" id="fig|502800.11.peg.2172"/>
<dbReference type="UniPathway" id="UPA00655">
    <property type="reaction ID" value="UER00711"/>
</dbReference>
<dbReference type="GO" id="GO:0009329">
    <property type="term" value="C:acetate CoA-transferase complex"/>
    <property type="evidence" value="ECO:0007669"/>
    <property type="project" value="TreeGrafter"/>
</dbReference>
<dbReference type="GO" id="GO:0003989">
    <property type="term" value="F:acetyl-CoA carboxylase activity"/>
    <property type="evidence" value="ECO:0007669"/>
    <property type="project" value="InterPro"/>
</dbReference>
<dbReference type="GO" id="GO:0005524">
    <property type="term" value="F:ATP binding"/>
    <property type="evidence" value="ECO:0007669"/>
    <property type="project" value="UniProtKB-KW"/>
</dbReference>
<dbReference type="GO" id="GO:0016743">
    <property type="term" value="F:carboxyl- or carbamoyltransferase activity"/>
    <property type="evidence" value="ECO:0007669"/>
    <property type="project" value="UniProtKB-UniRule"/>
</dbReference>
<dbReference type="GO" id="GO:0008270">
    <property type="term" value="F:zinc ion binding"/>
    <property type="evidence" value="ECO:0007669"/>
    <property type="project" value="UniProtKB-UniRule"/>
</dbReference>
<dbReference type="GO" id="GO:0006633">
    <property type="term" value="P:fatty acid biosynthetic process"/>
    <property type="evidence" value="ECO:0007669"/>
    <property type="project" value="UniProtKB-KW"/>
</dbReference>
<dbReference type="GO" id="GO:2001295">
    <property type="term" value="P:malonyl-CoA biosynthetic process"/>
    <property type="evidence" value="ECO:0007669"/>
    <property type="project" value="UniProtKB-UniRule"/>
</dbReference>
<dbReference type="FunFam" id="3.90.226.10:FF:000013">
    <property type="entry name" value="Acetyl-coenzyme A carboxylase carboxyl transferase subunit beta"/>
    <property type="match status" value="1"/>
</dbReference>
<dbReference type="Gene3D" id="3.90.226.10">
    <property type="entry name" value="2-enoyl-CoA Hydratase, Chain A, domain 1"/>
    <property type="match status" value="1"/>
</dbReference>
<dbReference type="HAMAP" id="MF_01395">
    <property type="entry name" value="AcetylCoA_CT_beta"/>
    <property type="match status" value="1"/>
</dbReference>
<dbReference type="InterPro" id="IPR034733">
    <property type="entry name" value="AcCoA_carboxyl_beta"/>
</dbReference>
<dbReference type="InterPro" id="IPR000438">
    <property type="entry name" value="Acetyl_CoA_COase_Trfase_b_su"/>
</dbReference>
<dbReference type="InterPro" id="IPR029045">
    <property type="entry name" value="ClpP/crotonase-like_dom_sf"/>
</dbReference>
<dbReference type="InterPro" id="IPR011762">
    <property type="entry name" value="COA_CT_N"/>
</dbReference>
<dbReference type="InterPro" id="IPR041010">
    <property type="entry name" value="Znf-ACC"/>
</dbReference>
<dbReference type="NCBIfam" id="TIGR00515">
    <property type="entry name" value="accD"/>
    <property type="match status" value="1"/>
</dbReference>
<dbReference type="PANTHER" id="PTHR42995">
    <property type="entry name" value="ACETYL-COENZYME A CARBOXYLASE CARBOXYL TRANSFERASE SUBUNIT BETA, CHLOROPLASTIC"/>
    <property type="match status" value="1"/>
</dbReference>
<dbReference type="PANTHER" id="PTHR42995:SF5">
    <property type="entry name" value="ACETYL-COENZYME A CARBOXYLASE CARBOXYL TRANSFERASE SUBUNIT BETA, CHLOROPLASTIC"/>
    <property type="match status" value="1"/>
</dbReference>
<dbReference type="Pfam" id="PF01039">
    <property type="entry name" value="Carboxyl_trans"/>
    <property type="match status" value="1"/>
</dbReference>
<dbReference type="Pfam" id="PF17848">
    <property type="entry name" value="Zn_ribbon_ACC"/>
    <property type="match status" value="1"/>
</dbReference>
<dbReference type="PRINTS" id="PR01070">
    <property type="entry name" value="ACCCTRFRASEB"/>
</dbReference>
<dbReference type="SUPFAM" id="SSF52096">
    <property type="entry name" value="ClpP/crotonase"/>
    <property type="match status" value="1"/>
</dbReference>
<dbReference type="PROSITE" id="PS50980">
    <property type="entry name" value="COA_CT_NTER"/>
    <property type="match status" value="1"/>
</dbReference>
<protein>
    <recommendedName>
        <fullName evidence="1">Acetyl-coenzyme A carboxylase carboxyl transferase subunit beta</fullName>
        <shortName evidence="1">ACCase subunit beta</shortName>
        <shortName evidence="1">Acetyl-CoA carboxylase carboxyltransferase subunit beta</shortName>
        <ecNumber evidence="1">2.1.3.15</ecNumber>
    </recommendedName>
</protein>
<reference key="1">
    <citation type="submission" date="2008-02" db="EMBL/GenBank/DDBJ databases">
        <title>Complete sequence of Yersinia pseudotuberculosis YPIII.</title>
        <authorList>
            <consortium name="US DOE Joint Genome Institute"/>
            <person name="Copeland A."/>
            <person name="Lucas S."/>
            <person name="Lapidus A."/>
            <person name="Glavina del Rio T."/>
            <person name="Dalin E."/>
            <person name="Tice H."/>
            <person name="Bruce D."/>
            <person name="Goodwin L."/>
            <person name="Pitluck S."/>
            <person name="Munk A.C."/>
            <person name="Brettin T."/>
            <person name="Detter J.C."/>
            <person name="Han C."/>
            <person name="Tapia R."/>
            <person name="Schmutz J."/>
            <person name="Larimer F."/>
            <person name="Land M."/>
            <person name="Hauser L."/>
            <person name="Challacombe J.F."/>
            <person name="Green L."/>
            <person name="Lindler L.E."/>
            <person name="Nikolich M.P."/>
            <person name="Richardson P."/>
        </authorList>
    </citation>
    <scope>NUCLEOTIDE SEQUENCE [LARGE SCALE GENOMIC DNA]</scope>
    <source>
        <strain>YPIII</strain>
    </source>
</reference>
<accession>B1JGI4</accession>
<feature type="chain" id="PRO_0000359112" description="Acetyl-coenzyme A carboxylase carboxyl transferase subunit beta">
    <location>
        <begin position="1"/>
        <end position="304"/>
    </location>
</feature>
<feature type="domain" description="CoA carboxyltransferase N-terminal" evidence="2">
    <location>
        <begin position="25"/>
        <end position="294"/>
    </location>
</feature>
<feature type="zinc finger region" description="C4-type" evidence="1">
    <location>
        <begin position="29"/>
        <end position="51"/>
    </location>
</feature>
<feature type="binding site" evidence="1">
    <location>
        <position position="29"/>
    </location>
    <ligand>
        <name>Zn(2+)</name>
        <dbReference type="ChEBI" id="CHEBI:29105"/>
    </ligand>
</feature>
<feature type="binding site" evidence="1">
    <location>
        <position position="32"/>
    </location>
    <ligand>
        <name>Zn(2+)</name>
        <dbReference type="ChEBI" id="CHEBI:29105"/>
    </ligand>
</feature>
<feature type="binding site" evidence="1">
    <location>
        <position position="48"/>
    </location>
    <ligand>
        <name>Zn(2+)</name>
        <dbReference type="ChEBI" id="CHEBI:29105"/>
    </ligand>
</feature>
<feature type="binding site" evidence="1">
    <location>
        <position position="51"/>
    </location>
    <ligand>
        <name>Zn(2+)</name>
        <dbReference type="ChEBI" id="CHEBI:29105"/>
    </ligand>
</feature>
<organism>
    <name type="scientific">Yersinia pseudotuberculosis serotype O:3 (strain YPIII)</name>
    <dbReference type="NCBI Taxonomy" id="502800"/>
    <lineage>
        <taxon>Bacteria</taxon>
        <taxon>Pseudomonadati</taxon>
        <taxon>Pseudomonadota</taxon>
        <taxon>Gammaproteobacteria</taxon>
        <taxon>Enterobacterales</taxon>
        <taxon>Yersiniaceae</taxon>
        <taxon>Yersinia</taxon>
    </lineage>
</organism>
<gene>
    <name evidence="1" type="primary">accD</name>
    <name type="ordered locus">YPK_1531</name>
</gene>
<evidence type="ECO:0000255" key="1">
    <source>
        <dbReference type="HAMAP-Rule" id="MF_01395"/>
    </source>
</evidence>
<evidence type="ECO:0000255" key="2">
    <source>
        <dbReference type="PROSITE-ProRule" id="PRU01136"/>
    </source>
</evidence>
<sequence>MSWIERILNKSNITQTRKASIPEGVWTKCDSCGQVLYRAELERNLEVCPKCDHHMRMSARARLHMLLDAGSEVELGSELEPKDILKFRDSKKYKDRISAAQKDTGEKDALVAMKGTLQGMPIVAASFEFAFMGGSMASVVGARFVRAVEQALEDNCPLVCFSSSGGARMQEALMSLMQMAKTSAALAKMQERGLPYISVLTDPTMGGVSASLAMLGDINIAEPKALIGFAGPRVIEQTVREKLPPGFQRSEFLIEKGAIDMIVRRPVMRQTLASILSKLTHQPQPSVVESKADTVAQPENQADV</sequence>
<keyword id="KW-0067">ATP-binding</keyword>
<keyword id="KW-0963">Cytoplasm</keyword>
<keyword id="KW-0275">Fatty acid biosynthesis</keyword>
<keyword id="KW-0276">Fatty acid metabolism</keyword>
<keyword id="KW-0444">Lipid biosynthesis</keyword>
<keyword id="KW-0443">Lipid metabolism</keyword>
<keyword id="KW-0479">Metal-binding</keyword>
<keyword id="KW-0547">Nucleotide-binding</keyword>
<keyword id="KW-0808">Transferase</keyword>
<keyword id="KW-0862">Zinc</keyword>
<keyword id="KW-0863">Zinc-finger</keyword>
<comment type="function">
    <text evidence="1">Component of the acetyl coenzyme A carboxylase (ACC) complex. Biotin carboxylase (BC) catalyzes the carboxylation of biotin on its carrier protein (BCCP) and then the CO(2) group is transferred by the transcarboxylase to acetyl-CoA to form malonyl-CoA.</text>
</comment>
<comment type="catalytic activity">
    <reaction evidence="1">
        <text>N(6)-carboxybiotinyl-L-lysyl-[protein] + acetyl-CoA = N(6)-biotinyl-L-lysyl-[protein] + malonyl-CoA</text>
        <dbReference type="Rhea" id="RHEA:54728"/>
        <dbReference type="Rhea" id="RHEA-COMP:10505"/>
        <dbReference type="Rhea" id="RHEA-COMP:10506"/>
        <dbReference type="ChEBI" id="CHEBI:57288"/>
        <dbReference type="ChEBI" id="CHEBI:57384"/>
        <dbReference type="ChEBI" id="CHEBI:83144"/>
        <dbReference type="ChEBI" id="CHEBI:83145"/>
        <dbReference type="EC" id="2.1.3.15"/>
    </reaction>
</comment>
<comment type="cofactor">
    <cofactor evidence="1">
        <name>Zn(2+)</name>
        <dbReference type="ChEBI" id="CHEBI:29105"/>
    </cofactor>
    <text evidence="1">Binds 1 zinc ion per subunit.</text>
</comment>
<comment type="pathway">
    <text evidence="1">Lipid metabolism; malonyl-CoA biosynthesis; malonyl-CoA from acetyl-CoA: step 1/1.</text>
</comment>
<comment type="subunit">
    <text evidence="1">Acetyl-CoA carboxylase is a heterohexamer composed of biotin carboxyl carrier protein (AccB), biotin carboxylase (AccC) and two subunits each of ACCase subunit alpha (AccA) and ACCase subunit beta (AccD).</text>
</comment>
<comment type="subcellular location">
    <subcellularLocation>
        <location evidence="1">Cytoplasm</location>
    </subcellularLocation>
</comment>
<comment type="similarity">
    <text evidence="1">Belongs to the AccD/PCCB family.</text>
</comment>